<name>MALF_VIBPA</name>
<reference key="1">
    <citation type="journal article" date="2003" name="Lancet">
        <title>Genome sequence of Vibrio parahaemolyticus: a pathogenic mechanism distinct from that of V. cholerae.</title>
        <authorList>
            <person name="Makino K."/>
            <person name="Oshima K."/>
            <person name="Kurokawa K."/>
            <person name="Yokoyama K."/>
            <person name="Uda T."/>
            <person name="Tagomori K."/>
            <person name="Iijima Y."/>
            <person name="Najima M."/>
            <person name="Nakano M."/>
            <person name="Yamashita A."/>
            <person name="Kubota Y."/>
            <person name="Kimura S."/>
            <person name="Yasunaga T."/>
            <person name="Honda T."/>
            <person name="Shinagawa H."/>
            <person name="Hattori M."/>
            <person name="Iida T."/>
        </authorList>
    </citation>
    <scope>NUCLEOTIDE SEQUENCE [LARGE SCALE GENOMIC DNA]</scope>
    <source>
        <strain>RIMD 2210633</strain>
    </source>
</reference>
<comment type="function">
    <text evidence="1">Part of the ABC transporter complex MalEFGK involved in maltose/maltodextrin import. Probably responsible for the translocation of the substrate across the membrane.</text>
</comment>
<comment type="subunit">
    <text evidence="1">The complex is composed of two ATP-binding proteins (MalK), two transmembrane proteins (MalG and MalF) and a solute-binding protein (MalE).</text>
</comment>
<comment type="subcellular location">
    <subcellularLocation>
        <location evidence="1">Cell inner membrane</location>
        <topology evidence="1">Multi-pass membrane protein</topology>
    </subcellularLocation>
</comment>
<comment type="similarity">
    <text evidence="4">Belongs to the binding-protein-dependent transport system permease family. MalFG subfamily.</text>
</comment>
<gene>
    <name type="primary">malF</name>
    <name type="ordered locus">VPA1400</name>
</gene>
<sequence>MQSVQGTNAMTAPEASLPSSKKVFIKWSLLGTVGILNGYATILMYSRGEIAFALLTIILTALALFIFGSKKTYAHRYIYPGIAGMILFILFPLAYTIGLAFTNYSAKNQLSFDRAQSVLLDRTYQSGDSYPFTLYNTDQGHQIVVEKDGELLATPVFQLQGFSETDLDLAPITEAAGDKEPIKTIVKNRTALSSVDLHLPNGDDIRMSGLRKFAAVVPLYTLQEDGETLYNNRTQETLRPNMEVGYYQPVDENGQFVGSTVSPGFVVNIGTHNFERVWKDDGIKEPFISIFIWTIVFSALTVVCTLVIGLVLASVVQWEALKGRSIYRLLLILPYAVPAFISILIFKGLFNQSFGEINMLLEGLFGISPAWFSDPFMAKTMILIVNTWLGFPYMMILCMGLLKAIPDDLYEASAIDGANFITNFTRITMPMMLKPLTPLLIASFAFNFNNFVLIQLLTGGGPNMIGTSEPAGYTDLLVSYTYRIAFEGAGGQDFGLASAVATLIFLLVGALALINLRVTKVAQD</sequence>
<dbReference type="EMBL" id="BA000032">
    <property type="protein sequence ID" value="BAC62743.1"/>
    <property type="molecule type" value="Genomic_DNA"/>
</dbReference>
<dbReference type="RefSeq" id="NP_800910.1">
    <property type="nucleotide sequence ID" value="NC_004605.1"/>
</dbReference>
<dbReference type="RefSeq" id="WP_011106507.1">
    <property type="nucleotide sequence ID" value="NC_004605.1"/>
</dbReference>
<dbReference type="SMR" id="Q87GB7"/>
<dbReference type="GeneID" id="1192096"/>
<dbReference type="KEGG" id="vpa:VPA1400"/>
<dbReference type="PATRIC" id="fig|223926.6.peg.4325"/>
<dbReference type="eggNOG" id="COG1175">
    <property type="taxonomic scope" value="Bacteria"/>
</dbReference>
<dbReference type="HOGENOM" id="CLU_016047_20_0_6"/>
<dbReference type="Proteomes" id="UP000002493">
    <property type="component" value="Chromosome 2"/>
</dbReference>
<dbReference type="GO" id="GO:1990060">
    <property type="term" value="C:maltose transport complex"/>
    <property type="evidence" value="ECO:0007669"/>
    <property type="project" value="TreeGrafter"/>
</dbReference>
<dbReference type="GO" id="GO:0015423">
    <property type="term" value="F:ABC-type maltose transporter activity"/>
    <property type="evidence" value="ECO:0007669"/>
    <property type="project" value="TreeGrafter"/>
</dbReference>
<dbReference type="GO" id="GO:0042956">
    <property type="term" value="P:maltodextrin transmembrane transport"/>
    <property type="evidence" value="ECO:0007669"/>
    <property type="project" value="TreeGrafter"/>
</dbReference>
<dbReference type="CDD" id="cd06261">
    <property type="entry name" value="TM_PBP2"/>
    <property type="match status" value="1"/>
</dbReference>
<dbReference type="FunFam" id="1.10.3720.10:FF:000030">
    <property type="entry name" value="Maltose ABC transporter permease MalF"/>
    <property type="match status" value="1"/>
</dbReference>
<dbReference type="Gene3D" id="2.40.430.10">
    <property type="entry name" value="D-maltodextrin-binding protein, MBP"/>
    <property type="match status" value="1"/>
</dbReference>
<dbReference type="Gene3D" id="1.20.58.370">
    <property type="entry name" value="MalF N-terminal region-like"/>
    <property type="match status" value="1"/>
</dbReference>
<dbReference type="Gene3D" id="3.10.650.10">
    <property type="entry name" value="MalF N-terminal region-like"/>
    <property type="match status" value="1"/>
</dbReference>
<dbReference type="Gene3D" id="1.10.3720.10">
    <property type="entry name" value="MetI-like"/>
    <property type="match status" value="1"/>
</dbReference>
<dbReference type="InterPro" id="IPR035277">
    <property type="entry name" value="MalF_N"/>
</dbReference>
<dbReference type="InterPro" id="IPR048464">
    <property type="entry name" value="MalF_N_TM"/>
</dbReference>
<dbReference type="InterPro" id="IPR029345">
    <property type="entry name" value="MalF_P2"/>
</dbReference>
<dbReference type="InterPro" id="IPR047103">
    <property type="entry name" value="MalF_P2_sf"/>
</dbReference>
<dbReference type="InterPro" id="IPR000515">
    <property type="entry name" value="MetI-like"/>
</dbReference>
<dbReference type="InterPro" id="IPR035906">
    <property type="entry name" value="MetI-like_sf"/>
</dbReference>
<dbReference type="NCBIfam" id="NF008232">
    <property type="entry name" value="PRK10999.1"/>
    <property type="match status" value="1"/>
</dbReference>
<dbReference type="PANTHER" id="PTHR47314">
    <property type="entry name" value="MALTOSE/MALTODEXTRIN TRANSPORT SYSTEM PERMEASE PROTEIN MALF"/>
    <property type="match status" value="1"/>
</dbReference>
<dbReference type="PANTHER" id="PTHR47314:SF1">
    <property type="entry name" value="MALTOSE_MALTODEXTRIN TRANSPORT SYSTEM PERMEASE PROTEIN MALF"/>
    <property type="match status" value="1"/>
</dbReference>
<dbReference type="Pfam" id="PF00528">
    <property type="entry name" value="BPD_transp_1"/>
    <property type="match status" value="1"/>
</dbReference>
<dbReference type="Pfam" id="PF20872">
    <property type="entry name" value="MalF_N_TM"/>
    <property type="match status" value="1"/>
</dbReference>
<dbReference type="Pfam" id="PF14785">
    <property type="entry name" value="MalF_P2"/>
    <property type="match status" value="1"/>
</dbReference>
<dbReference type="SUPFAM" id="SSF160964">
    <property type="entry name" value="MalF N-terminal region-like"/>
    <property type="match status" value="1"/>
</dbReference>
<dbReference type="SUPFAM" id="SSF161098">
    <property type="entry name" value="MetI-like"/>
    <property type="match status" value="1"/>
</dbReference>
<dbReference type="PROSITE" id="PS50928">
    <property type="entry name" value="ABC_TM1"/>
    <property type="match status" value="1"/>
</dbReference>
<keyword id="KW-0997">Cell inner membrane</keyword>
<keyword id="KW-1003">Cell membrane</keyword>
<keyword id="KW-0472">Membrane</keyword>
<keyword id="KW-0762">Sugar transport</keyword>
<keyword id="KW-0812">Transmembrane</keyword>
<keyword id="KW-1133">Transmembrane helix</keyword>
<keyword id="KW-0813">Transport</keyword>
<proteinExistence type="inferred from homology"/>
<accession>Q87GB7</accession>
<evidence type="ECO:0000250" key="1">
    <source>
        <dbReference type="UniProtKB" id="P02916"/>
    </source>
</evidence>
<evidence type="ECO:0000255" key="2"/>
<evidence type="ECO:0000255" key="3">
    <source>
        <dbReference type="PROSITE-ProRule" id="PRU00441"/>
    </source>
</evidence>
<evidence type="ECO:0000305" key="4"/>
<protein>
    <recommendedName>
        <fullName evidence="1">Maltose/maltodextrin transport system permease protein MalF</fullName>
    </recommendedName>
</protein>
<organism>
    <name type="scientific">Vibrio parahaemolyticus serotype O3:K6 (strain RIMD 2210633)</name>
    <dbReference type="NCBI Taxonomy" id="223926"/>
    <lineage>
        <taxon>Bacteria</taxon>
        <taxon>Pseudomonadati</taxon>
        <taxon>Pseudomonadota</taxon>
        <taxon>Gammaproteobacteria</taxon>
        <taxon>Vibrionales</taxon>
        <taxon>Vibrionaceae</taxon>
        <taxon>Vibrio</taxon>
    </lineage>
</organism>
<feature type="chain" id="PRO_0000060077" description="Maltose/maltodextrin transport system permease protein MalF">
    <location>
        <begin position="1"/>
        <end position="524"/>
    </location>
</feature>
<feature type="topological domain" description="Cytoplasmic" evidence="2">
    <location>
        <begin position="1"/>
        <end position="22"/>
    </location>
</feature>
<feature type="transmembrane region" description="Helical" evidence="3">
    <location>
        <begin position="23"/>
        <end position="45"/>
    </location>
</feature>
<feature type="topological domain" description="Periplasmic" evidence="2">
    <location>
        <begin position="46"/>
        <end position="49"/>
    </location>
</feature>
<feature type="transmembrane region" description="Helical" evidence="3">
    <location>
        <begin position="50"/>
        <end position="69"/>
    </location>
</feature>
<feature type="topological domain" description="Cytoplasmic" evidence="2">
    <location>
        <begin position="70"/>
        <end position="81"/>
    </location>
</feature>
<feature type="transmembrane region" description="Helical" evidence="3">
    <location>
        <begin position="82"/>
        <end position="104"/>
    </location>
</feature>
<feature type="topological domain" description="Periplasmic" evidence="2">
    <location>
        <begin position="105"/>
        <end position="290"/>
    </location>
</feature>
<feature type="transmembrane region" description="Helical" evidence="3">
    <location>
        <begin position="291"/>
        <end position="313"/>
    </location>
</feature>
<feature type="topological domain" description="Cytoplasmic" evidence="2">
    <location>
        <begin position="314"/>
        <end position="325"/>
    </location>
</feature>
<feature type="transmembrane region" description="Helical" evidence="3">
    <location>
        <begin position="326"/>
        <end position="345"/>
    </location>
</feature>
<feature type="topological domain" description="Periplasmic" evidence="2">
    <location>
        <begin position="346"/>
        <end position="379"/>
    </location>
</feature>
<feature type="transmembrane region" description="Helical" evidence="3">
    <location>
        <begin position="380"/>
        <end position="402"/>
    </location>
</feature>
<feature type="topological domain" description="Cytoplasmic" evidence="2">
    <location>
        <begin position="403"/>
        <end position="435"/>
    </location>
</feature>
<feature type="transmembrane region" description="Helical" evidence="3">
    <location>
        <begin position="436"/>
        <end position="458"/>
    </location>
</feature>
<feature type="topological domain" description="Periplasmic" evidence="2">
    <location>
        <begin position="459"/>
        <end position="493"/>
    </location>
</feature>
<feature type="transmembrane region" description="Helical" evidence="3">
    <location>
        <begin position="494"/>
        <end position="516"/>
    </location>
</feature>
<feature type="topological domain" description="Cytoplasmic" evidence="2">
    <location>
        <begin position="517"/>
        <end position="524"/>
    </location>
</feature>
<feature type="domain" description="ABC transmembrane type-1" evidence="3">
    <location>
        <begin position="291"/>
        <end position="515"/>
    </location>
</feature>